<reference key="1">
    <citation type="journal article" date="2002" name="Nature">
        <title>The genome sequence of Schizosaccharomyces pombe.</title>
        <authorList>
            <person name="Wood V."/>
            <person name="Gwilliam R."/>
            <person name="Rajandream M.A."/>
            <person name="Lyne M.H."/>
            <person name="Lyne R."/>
            <person name="Stewart A."/>
            <person name="Sgouros J.G."/>
            <person name="Peat N."/>
            <person name="Hayles J."/>
            <person name="Baker S.G."/>
            <person name="Basham D."/>
            <person name="Bowman S."/>
            <person name="Brooks K."/>
            <person name="Brown D."/>
            <person name="Brown S."/>
            <person name="Chillingworth T."/>
            <person name="Churcher C.M."/>
            <person name="Collins M."/>
            <person name="Connor R."/>
            <person name="Cronin A."/>
            <person name="Davis P."/>
            <person name="Feltwell T."/>
            <person name="Fraser A."/>
            <person name="Gentles S."/>
            <person name="Goble A."/>
            <person name="Hamlin N."/>
            <person name="Harris D.E."/>
            <person name="Hidalgo J."/>
            <person name="Hodgson G."/>
            <person name="Holroyd S."/>
            <person name="Hornsby T."/>
            <person name="Howarth S."/>
            <person name="Huckle E.J."/>
            <person name="Hunt S."/>
            <person name="Jagels K."/>
            <person name="James K.D."/>
            <person name="Jones L."/>
            <person name="Jones M."/>
            <person name="Leather S."/>
            <person name="McDonald S."/>
            <person name="McLean J."/>
            <person name="Mooney P."/>
            <person name="Moule S."/>
            <person name="Mungall K.L."/>
            <person name="Murphy L.D."/>
            <person name="Niblett D."/>
            <person name="Odell C."/>
            <person name="Oliver K."/>
            <person name="O'Neil S."/>
            <person name="Pearson D."/>
            <person name="Quail M.A."/>
            <person name="Rabbinowitsch E."/>
            <person name="Rutherford K.M."/>
            <person name="Rutter S."/>
            <person name="Saunders D."/>
            <person name="Seeger K."/>
            <person name="Sharp S."/>
            <person name="Skelton J."/>
            <person name="Simmonds M.N."/>
            <person name="Squares R."/>
            <person name="Squares S."/>
            <person name="Stevens K."/>
            <person name="Taylor K."/>
            <person name="Taylor R.G."/>
            <person name="Tivey A."/>
            <person name="Walsh S.V."/>
            <person name="Warren T."/>
            <person name="Whitehead S."/>
            <person name="Woodward J.R."/>
            <person name="Volckaert G."/>
            <person name="Aert R."/>
            <person name="Robben J."/>
            <person name="Grymonprez B."/>
            <person name="Weltjens I."/>
            <person name="Vanstreels E."/>
            <person name="Rieger M."/>
            <person name="Schaefer M."/>
            <person name="Mueller-Auer S."/>
            <person name="Gabel C."/>
            <person name="Fuchs M."/>
            <person name="Duesterhoeft A."/>
            <person name="Fritzc C."/>
            <person name="Holzer E."/>
            <person name="Moestl D."/>
            <person name="Hilbert H."/>
            <person name="Borzym K."/>
            <person name="Langer I."/>
            <person name="Beck A."/>
            <person name="Lehrach H."/>
            <person name="Reinhardt R."/>
            <person name="Pohl T.M."/>
            <person name="Eger P."/>
            <person name="Zimmermann W."/>
            <person name="Wedler H."/>
            <person name="Wambutt R."/>
            <person name="Purnelle B."/>
            <person name="Goffeau A."/>
            <person name="Cadieu E."/>
            <person name="Dreano S."/>
            <person name="Gloux S."/>
            <person name="Lelaure V."/>
            <person name="Mottier S."/>
            <person name="Galibert F."/>
            <person name="Aves S.J."/>
            <person name="Xiang Z."/>
            <person name="Hunt C."/>
            <person name="Moore K."/>
            <person name="Hurst S.M."/>
            <person name="Lucas M."/>
            <person name="Rochet M."/>
            <person name="Gaillardin C."/>
            <person name="Tallada V.A."/>
            <person name="Garzon A."/>
            <person name="Thode G."/>
            <person name="Daga R.R."/>
            <person name="Cruzado L."/>
            <person name="Jimenez J."/>
            <person name="Sanchez M."/>
            <person name="del Rey F."/>
            <person name="Benito J."/>
            <person name="Dominguez A."/>
            <person name="Revuelta J.L."/>
            <person name="Moreno S."/>
            <person name="Armstrong J."/>
            <person name="Forsburg S.L."/>
            <person name="Cerutti L."/>
            <person name="Lowe T."/>
            <person name="McCombie W.R."/>
            <person name="Paulsen I."/>
            <person name="Potashkin J."/>
            <person name="Shpakovski G.V."/>
            <person name="Ussery D."/>
            <person name="Barrell B.G."/>
            <person name="Nurse P."/>
        </authorList>
    </citation>
    <scope>NUCLEOTIDE SEQUENCE [LARGE SCALE GENOMIC DNA]</scope>
    <source>
        <strain>972 / ATCC 24843</strain>
    </source>
</reference>
<reference key="2">
    <citation type="journal article" date="2006" name="Nat. Biotechnol.">
        <title>ORFeome cloning and global analysis of protein localization in the fission yeast Schizosaccharomyces pombe.</title>
        <authorList>
            <person name="Matsuyama A."/>
            <person name="Arai R."/>
            <person name="Yashiroda Y."/>
            <person name="Shirai A."/>
            <person name="Kamata A."/>
            <person name="Sekido S."/>
            <person name="Kobayashi Y."/>
            <person name="Hashimoto A."/>
            <person name="Hamamoto M."/>
            <person name="Hiraoka Y."/>
            <person name="Horinouchi S."/>
            <person name="Yoshida M."/>
        </authorList>
    </citation>
    <scope>SUBCELLULAR LOCATION [LARGE SCALE ANALYSIS]</scope>
</reference>
<reference key="3">
    <citation type="journal article" date="2008" name="J. Proteome Res.">
        <title>Phosphoproteome analysis of fission yeast.</title>
        <authorList>
            <person name="Wilson-Grady J.T."/>
            <person name="Villen J."/>
            <person name="Gygi S.P."/>
        </authorList>
    </citation>
    <scope>PHOSPHORYLATION [LARGE SCALE ANALYSIS] AT SER-1258; SER-1261; SER-1266; SER-1379 AND THR-1380</scope>
    <scope>IDENTIFICATION BY MASS SPECTROMETRY</scope>
</reference>
<keyword id="KW-0963">Cytoplasm</keyword>
<keyword id="KW-0597">Phosphoprotein</keyword>
<keyword id="KW-1185">Reference proteome</keyword>
<keyword id="KW-0728">SH3 domain</keyword>
<protein>
    <recommendedName>
        <fullName>SH3 domain-containing protein C23A1.17</fullName>
    </recommendedName>
</protein>
<sequence>MSSFPTRVVALYPYRSSFSDDLEFDPGQVIDVVSNLDGDWYTGTYVDSDGNRKIGSFPKDFTEPAEDAVFVERASEMALHQPTPTSAVHSRNSSLGYAPSITRSIKSISNNTEHLGADTESYLSANDFIDSTSEALTKIVDVDTLSAPFGNDSNSRPHSLKNVEKLHTFSAPYTISEETPSCSTENDSLPLTATHTITGGEDAATGAAVTNTTTTHITTSTNTSTVIPSNPNSVFLVDCTHSQCPTDLPNIATTQHSLRYLDNASASAITVLERTHPAASSTMATESSHQSPSADSQAEELSKSQRVAKDDDPFVVSNTANSDEPASSSKPAKPLTDLNRAFSQRLNLDPQKPGKSQGEISEQEEDEYDDAESDEMHSPYSTHEPESEPEDQDEPSEKDDENKDVEEEQEQEQEEEQIDPEEAKRIALRERMAKMSGGIGMHVFGLPGLAAPIGRKNTLRRTPAKSSEEAKSTTNDSSPPKDSSSTSTQPTEQSNAQQAPSPKEEERPLPSEPSQNQPAEYRDTPDTPRNIMPLPGLMSADQPIKVTEPSNDADKAIVAEGPNNEEETKGPVIPETQETSEQQVHKTPSPEKQKVLSPPPIITNFDKETLASNEAHEAVPQKPSAPQVTRLMAPQDSSSVVTPSPTSLLDPARAVRKVIDGIDPPKEAGAGATADVESAANSPITPPRTWHSPDFTSKSFEPIERKLPSRISEVTEDSIDEDKQNEVDPSTSARALPPPGLRFGKVDTLASLAHDDLDDLPAVPRIFSPPPLPKTPSGEFGDNEFMFPKKSNRVRGHQSRPSTGSQLRNVVPVSIVTSGGRPALPDEMASPSSSIGHPLPSPPPADFNSLNVDFYEPHSYLESPAPEPQPSYEEESFNATVIHAPTPSTATFQGHPTISNVATPPLKQDVTESKASPVADASATHQSSTGLTQEITQLGSNMRLPTKLTRPSNDGRKASGPRPAAPPSIPPPLPVSNILSSPTSEPPKDHPPSAPLSKPVSTSPAAPLARVPPVPKLSSKAPPVPLPSADAPPIPVPSTAPPVPIPTSTPPVPKSSSGAPSAPPPVPAPSSEIPSIPAPSGAPPVPAPSGIPPVPKPSVAAPPVPKPSVAVPPVPAPSGAPPVPKPSVAAPPVPVPSGAPPVPKPSVAAPPVPAPSGAPPVPKPSVAAPPVPAPSSGIPPVPKPAAGVPPVPPPSEAPPVPKPSVGVPPVPPPSTAPPVPTPSAGLPPVPVPTAKAPPVPAPSSEAPSVSTPRSSVPSPHSNASPSPTSSSMASAAPARTSVSRSKSKAERHETSTSSRKSSKSGEHHHHHNEGHADSSSTRTSLAHQDSRKSLHRHLSRSSSRASKKPSIVSTTGPFNESFSAKPVEPCASEKWWLNSTAVPKSVVQMNDSVLYMIKEGITGQDKKYKSVHILFPDYSQTVLTATFNPHNQNITQLSQLQLAPPAQPSKARLDEEYACYGSTILKKARAYQGSMVGDGSAFTFVNSVMSILAHNLEPINKQTFGGVIYKNVGNVTVQQIGEIRPGDIVTFDKAKFSGQKGTLRSKYSLEVGKPMHYGIISEWDVSKLKIRVLEQGRESKKVSVASYKFGDLKSGEVTVWRVMRRSWLGWN</sequence>
<feature type="chain" id="PRO_0000303941" description="SH3 domain-containing protein C23A1.17">
    <location>
        <begin position="1"/>
        <end position="1611"/>
    </location>
</feature>
<feature type="domain" description="SH3" evidence="1">
    <location>
        <begin position="3"/>
        <end position="67"/>
    </location>
</feature>
<feature type="region of interest" description="Disordered" evidence="2">
    <location>
        <begin position="275"/>
        <end position="648"/>
    </location>
</feature>
<feature type="region of interest" description="Disordered" evidence="2">
    <location>
        <begin position="662"/>
        <end position="741"/>
    </location>
</feature>
<feature type="region of interest" description="Disordered" evidence="2">
    <location>
        <begin position="762"/>
        <end position="851"/>
    </location>
</feature>
<feature type="region of interest" description="Disordered" evidence="2">
    <location>
        <begin position="886"/>
        <end position="1365"/>
    </location>
</feature>
<feature type="compositionally biased region" description="Polar residues" evidence="2">
    <location>
        <begin position="278"/>
        <end position="296"/>
    </location>
</feature>
<feature type="compositionally biased region" description="Basic and acidic residues" evidence="2">
    <location>
        <begin position="300"/>
        <end position="312"/>
    </location>
</feature>
<feature type="compositionally biased region" description="Polar residues" evidence="2">
    <location>
        <begin position="316"/>
        <end position="330"/>
    </location>
</feature>
<feature type="compositionally biased region" description="Acidic residues" evidence="2">
    <location>
        <begin position="361"/>
        <end position="373"/>
    </location>
</feature>
<feature type="compositionally biased region" description="Acidic residues" evidence="2">
    <location>
        <begin position="387"/>
        <end position="420"/>
    </location>
</feature>
<feature type="compositionally biased region" description="Basic and acidic residues" evidence="2">
    <location>
        <begin position="421"/>
        <end position="433"/>
    </location>
</feature>
<feature type="compositionally biased region" description="Low complexity" evidence="2">
    <location>
        <begin position="472"/>
        <end position="494"/>
    </location>
</feature>
<feature type="compositionally biased region" description="Polar residues" evidence="2">
    <location>
        <begin position="576"/>
        <end position="586"/>
    </location>
</feature>
<feature type="compositionally biased region" description="Basic and acidic residues" evidence="2">
    <location>
        <begin position="605"/>
        <end position="619"/>
    </location>
</feature>
<feature type="compositionally biased region" description="Low complexity" evidence="2">
    <location>
        <begin position="637"/>
        <end position="648"/>
    </location>
</feature>
<feature type="compositionally biased region" description="Polar residues" evidence="2">
    <location>
        <begin position="799"/>
        <end position="808"/>
    </location>
</feature>
<feature type="compositionally biased region" description="Polar residues" evidence="2">
    <location>
        <begin position="886"/>
        <end position="902"/>
    </location>
</feature>
<feature type="compositionally biased region" description="Polar residues" evidence="2">
    <location>
        <begin position="923"/>
        <end position="940"/>
    </location>
</feature>
<feature type="compositionally biased region" description="Pro residues" evidence="2">
    <location>
        <begin position="963"/>
        <end position="974"/>
    </location>
</feature>
<feature type="compositionally biased region" description="Pro residues" evidence="2">
    <location>
        <begin position="1022"/>
        <end position="1053"/>
    </location>
</feature>
<feature type="compositionally biased region" description="Pro residues" evidence="2">
    <location>
        <begin position="1076"/>
        <end position="1241"/>
    </location>
</feature>
<feature type="compositionally biased region" description="Low complexity" evidence="2">
    <location>
        <begin position="1242"/>
        <end position="1278"/>
    </location>
</feature>
<feature type="compositionally biased region" description="Basic residues" evidence="2">
    <location>
        <begin position="1300"/>
        <end position="1312"/>
    </location>
</feature>
<feature type="compositionally biased region" description="Polar residues" evidence="2">
    <location>
        <begin position="1317"/>
        <end position="1327"/>
    </location>
</feature>
<feature type="compositionally biased region" description="Low complexity" evidence="2">
    <location>
        <begin position="1340"/>
        <end position="1350"/>
    </location>
</feature>
<feature type="compositionally biased region" description="Polar residues" evidence="2">
    <location>
        <begin position="1351"/>
        <end position="1362"/>
    </location>
</feature>
<feature type="modified residue" description="Phosphoserine" evidence="4">
    <location>
        <position position="1258"/>
    </location>
</feature>
<feature type="modified residue" description="Phosphoserine" evidence="4">
    <location>
        <position position="1261"/>
    </location>
</feature>
<feature type="modified residue" description="Phosphoserine" evidence="4">
    <location>
        <position position="1266"/>
    </location>
</feature>
<feature type="modified residue" description="Phosphoserine" evidence="4">
    <location>
        <position position="1379"/>
    </location>
</feature>
<feature type="modified residue" description="Phosphothreonine" evidence="4">
    <location>
        <position position="1380"/>
    </location>
</feature>
<proteinExistence type="evidence at protein level"/>
<accession>O42854</accession>
<comment type="subcellular location">
    <subcellularLocation>
        <location evidence="3">Cytoplasm</location>
    </subcellularLocation>
    <text>Localizes at the cell tip and barrier septum.</text>
</comment>
<evidence type="ECO:0000255" key="1">
    <source>
        <dbReference type="PROSITE-ProRule" id="PRU00192"/>
    </source>
</evidence>
<evidence type="ECO:0000256" key="2">
    <source>
        <dbReference type="SAM" id="MobiDB-lite"/>
    </source>
</evidence>
<evidence type="ECO:0000269" key="3">
    <source>
    </source>
</evidence>
<evidence type="ECO:0000269" key="4">
    <source>
    </source>
</evidence>
<name>YFHH_SCHPO</name>
<organism>
    <name type="scientific">Schizosaccharomyces pombe (strain 972 / ATCC 24843)</name>
    <name type="common">Fission yeast</name>
    <dbReference type="NCBI Taxonomy" id="284812"/>
    <lineage>
        <taxon>Eukaryota</taxon>
        <taxon>Fungi</taxon>
        <taxon>Dikarya</taxon>
        <taxon>Ascomycota</taxon>
        <taxon>Taphrinomycotina</taxon>
        <taxon>Schizosaccharomycetes</taxon>
        <taxon>Schizosaccharomycetales</taxon>
        <taxon>Schizosaccharomycetaceae</taxon>
        <taxon>Schizosaccharomyces</taxon>
    </lineage>
</organism>
<gene>
    <name type="ORF">SPAC23A1.17</name>
</gene>
<dbReference type="EMBL" id="CU329670">
    <property type="protein sequence ID" value="CAA16991.1"/>
    <property type="molecule type" value="Genomic_DNA"/>
</dbReference>
<dbReference type="PIR" id="T38236">
    <property type="entry name" value="T38236"/>
</dbReference>
<dbReference type="SMR" id="O42854"/>
<dbReference type="BioGRID" id="278502">
    <property type="interactions" value="11"/>
</dbReference>
<dbReference type="STRING" id="284812.O42854"/>
<dbReference type="iPTMnet" id="O42854"/>
<dbReference type="PaxDb" id="4896-SPAC23A1.17.1"/>
<dbReference type="EnsemblFungi" id="SPAC23A1.17.1">
    <property type="protein sequence ID" value="SPAC23A1.17.1:pep"/>
    <property type="gene ID" value="SPAC23A1.17"/>
</dbReference>
<dbReference type="KEGG" id="spo:2542019"/>
<dbReference type="PomBase" id="SPAC23A1.17"/>
<dbReference type="VEuPathDB" id="FungiDB:SPAC23A1.17"/>
<dbReference type="eggNOG" id="ENOG502QQMM">
    <property type="taxonomic scope" value="Eukaryota"/>
</dbReference>
<dbReference type="HOGENOM" id="CLU_243881_0_0_1"/>
<dbReference type="InParanoid" id="O42854"/>
<dbReference type="OMA" id="DISTEPM"/>
<dbReference type="Reactome" id="R-SPO-5668599">
    <property type="pathway name" value="RHO GTPases Activate NADPH Oxidases"/>
</dbReference>
<dbReference type="PRO" id="PR:O42854"/>
<dbReference type="Proteomes" id="UP000002485">
    <property type="component" value="Chromosome I"/>
</dbReference>
<dbReference type="GO" id="GO:0030479">
    <property type="term" value="C:actin cortical patch"/>
    <property type="evidence" value="ECO:0000266"/>
    <property type="project" value="PomBase"/>
</dbReference>
<dbReference type="GO" id="GO:0032153">
    <property type="term" value="C:cell division site"/>
    <property type="evidence" value="ECO:0007005"/>
    <property type="project" value="PomBase"/>
</dbReference>
<dbReference type="GO" id="GO:0051286">
    <property type="term" value="C:cell tip"/>
    <property type="evidence" value="ECO:0007005"/>
    <property type="project" value="PomBase"/>
</dbReference>
<dbReference type="GO" id="GO:0005829">
    <property type="term" value="C:cytosol"/>
    <property type="evidence" value="ECO:0007005"/>
    <property type="project" value="PomBase"/>
</dbReference>
<dbReference type="GO" id="GO:0017024">
    <property type="term" value="F:myosin I binding"/>
    <property type="evidence" value="ECO:0000266"/>
    <property type="project" value="PomBase"/>
</dbReference>
<dbReference type="GO" id="GO:0030036">
    <property type="term" value="P:actin cytoskeleton organization"/>
    <property type="evidence" value="ECO:0000266"/>
    <property type="project" value="PomBase"/>
</dbReference>
<dbReference type="CDD" id="cd11887">
    <property type="entry name" value="SH3_Bbc1"/>
    <property type="match status" value="1"/>
</dbReference>
<dbReference type="Gene3D" id="2.30.30.40">
    <property type="entry name" value="SH3 Domains"/>
    <property type="match status" value="1"/>
</dbReference>
<dbReference type="InterPro" id="IPR035552">
    <property type="entry name" value="Mti1_SH3"/>
</dbReference>
<dbReference type="InterPro" id="IPR051864">
    <property type="entry name" value="NCF2_NOXA1"/>
</dbReference>
<dbReference type="InterPro" id="IPR036028">
    <property type="entry name" value="SH3-like_dom_sf"/>
</dbReference>
<dbReference type="InterPro" id="IPR001452">
    <property type="entry name" value="SH3_domain"/>
</dbReference>
<dbReference type="PANTHER" id="PTHR15175">
    <property type="entry name" value="NEUTROPHIL CYTOSOLIC FACTOR 2, NEUTROPHIL NADPH OXIDASE FACTOR 2"/>
    <property type="match status" value="1"/>
</dbReference>
<dbReference type="PANTHER" id="PTHR15175:SF0">
    <property type="entry name" value="SH3 DOMAIN-CONTAINING PROTEIN C23A1.17"/>
    <property type="match status" value="1"/>
</dbReference>
<dbReference type="Pfam" id="PF25459">
    <property type="entry name" value="AIM3_BBC1_C"/>
    <property type="match status" value="1"/>
</dbReference>
<dbReference type="Pfam" id="PF00018">
    <property type="entry name" value="SH3_1"/>
    <property type="match status" value="1"/>
</dbReference>
<dbReference type="SMART" id="SM00326">
    <property type="entry name" value="SH3"/>
    <property type="match status" value="1"/>
</dbReference>
<dbReference type="SUPFAM" id="SSF50044">
    <property type="entry name" value="SH3-domain"/>
    <property type="match status" value="1"/>
</dbReference>
<dbReference type="PROSITE" id="PS50002">
    <property type="entry name" value="SH3"/>
    <property type="match status" value="1"/>
</dbReference>